<dbReference type="EC" id="2.7.-.-" evidence="1"/>
<dbReference type="EMBL" id="CP000720">
    <property type="protein sequence ID" value="ABS48959.1"/>
    <property type="molecule type" value="Genomic_DNA"/>
</dbReference>
<dbReference type="RefSeq" id="WP_002211535.1">
    <property type="nucleotide sequence ID" value="NC_009708.1"/>
</dbReference>
<dbReference type="SMR" id="A7FDE2"/>
<dbReference type="GeneID" id="57974929"/>
<dbReference type="KEGG" id="ypi:YpsIP31758_0273"/>
<dbReference type="HOGENOM" id="CLU_006533_0_0_6"/>
<dbReference type="UniPathway" id="UPA00232"/>
<dbReference type="Proteomes" id="UP000002412">
    <property type="component" value="Chromosome"/>
</dbReference>
<dbReference type="GO" id="GO:0005886">
    <property type="term" value="C:plasma membrane"/>
    <property type="evidence" value="ECO:0007669"/>
    <property type="project" value="UniProtKB-SubCell"/>
</dbReference>
<dbReference type="GO" id="GO:0005524">
    <property type="term" value="F:ATP binding"/>
    <property type="evidence" value="ECO:0007669"/>
    <property type="project" value="UniProtKB-KW"/>
</dbReference>
<dbReference type="GO" id="GO:0004672">
    <property type="term" value="F:protein kinase activity"/>
    <property type="evidence" value="ECO:0007669"/>
    <property type="project" value="UniProtKB-UniRule"/>
</dbReference>
<dbReference type="GO" id="GO:0010795">
    <property type="term" value="P:regulation of ubiquinone biosynthetic process"/>
    <property type="evidence" value="ECO:0007669"/>
    <property type="project" value="UniProtKB-UniRule"/>
</dbReference>
<dbReference type="GO" id="GO:0006744">
    <property type="term" value="P:ubiquinone biosynthetic process"/>
    <property type="evidence" value="ECO:0007669"/>
    <property type="project" value="UniProtKB-UniPathway"/>
</dbReference>
<dbReference type="CDD" id="cd13972">
    <property type="entry name" value="UbiB"/>
    <property type="match status" value="1"/>
</dbReference>
<dbReference type="HAMAP" id="MF_00414">
    <property type="entry name" value="UbiB"/>
    <property type="match status" value="1"/>
</dbReference>
<dbReference type="InterPro" id="IPR004147">
    <property type="entry name" value="ABC1_dom"/>
</dbReference>
<dbReference type="InterPro" id="IPR011009">
    <property type="entry name" value="Kinase-like_dom_sf"/>
</dbReference>
<dbReference type="InterPro" id="IPR010232">
    <property type="entry name" value="UbiB"/>
</dbReference>
<dbReference type="InterPro" id="IPR045308">
    <property type="entry name" value="UbiB_bact"/>
</dbReference>
<dbReference type="InterPro" id="IPR050154">
    <property type="entry name" value="UbiB_kinase"/>
</dbReference>
<dbReference type="NCBIfam" id="NF003404">
    <property type="entry name" value="PRK04750.1"/>
    <property type="match status" value="1"/>
</dbReference>
<dbReference type="NCBIfam" id="TIGR01982">
    <property type="entry name" value="UbiB"/>
    <property type="match status" value="1"/>
</dbReference>
<dbReference type="PANTHER" id="PTHR10566">
    <property type="entry name" value="CHAPERONE-ACTIVITY OF BC1 COMPLEX CABC1 -RELATED"/>
    <property type="match status" value="1"/>
</dbReference>
<dbReference type="PANTHER" id="PTHR10566:SF113">
    <property type="entry name" value="PROTEIN ACTIVITY OF BC1 COMPLEX KINASE 7, CHLOROPLASTIC"/>
    <property type="match status" value="1"/>
</dbReference>
<dbReference type="Pfam" id="PF03109">
    <property type="entry name" value="ABC1"/>
    <property type="match status" value="1"/>
</dbReference>
<dbReference type="SUPFAM" id="SSF56112">
    <property type="entry name" value="Protein kinase-like (PK-like)"/>
    <property type="match status" value="1"/>
</dbReference>
<sequence length="543" mass="62427">MTPGELRRLYLIIRVFLSYGLDELIPNIRLTLPLRVGRHLFFWLSNRHKDKSLGERLRLALQELGPVWIKFGQMMSTRRDLFPPNIADQLALLQDRVASFDGALARKHIEIAMGGALETWFDDFDSQALASASIAQVHTARLKENGKEVVLKVIRPDILPIIKADVRLMYRLAGWVPKLLPDGRRLRPREVVREYEKTLLDELNLLREAANAIQLRRNFEDSPMLYIPEVYSDYCRESVLVMERIYGIPVSDIAALEDQGTNMKLLAERGVQVFFTQVFRDSFFHADMHPGNIFVSYEHPHDPLYIGIDCGIVGSLNKADKRYLAENFIAFFNRDYRRVAELHVDSGWVPRDTNVEDFEFAIRTVCEPIFEKPLAEISFGHVLLNLFNTARRFNMEVQPQLVLLQKTLLYVEGLGRQLYPQLDLWTTAKPFLESWLRDQVGLPAVIRALKEKAPFWAEKFPELPELVYDSLQQHKLLQQSVEKLTIQIQGQQQRQGQSRYLFGVGATLLVSGTILFLADATEVSTGFIVAGALAWFIGWRRTC</sequence>
<keyword id="KW-0067">ATP-binding</keyword>
<keyword id="KW-0997">Cell inner membrane</keyword>
<keyword id="KW-1003">Cell membrane</keyword>
<keyword id="KW-0418">Kinase</keyword>
<keyword id="KW-0472">Membrane</keyword>
<keyword id="KW-0547">Nucleotide-binding</keyword>
<keyword id="KW-0808">Transferase</keyword>
<keyword id="KW-0812">Transmembrane</keyword>
<keyword id="KW-1133">Transmembrane helix</keyword>
<keyword id="KW-0831">Ubiquinone biosynthesis</keyword>
<proteinExistence type="inferred from homology"/>
<accession>A7FDE2</accession>
<name>UBIB_YERP3</name>
<organism>
    <name type="scientific">Yersinia pseudotuberculosis serotype O:1b (strain IP 31758)</name>
    <dbReference type="NCBI Taxonomy" id="349747"/>
    <lineage>
        <taxon>Bacteria</taxon>
        <taxon>Pseudomonadati</taxon>
        <taxon>Pseudomonadota</taxon>
        <taxon>Gammaproteobacteria</taxon>
        <taxon>Enterobacterales</taxon>
        <taxon>Yersiniaceae</taxon>
        <taxon>Yersinia</taxon>
    </lineage>
</organism>
<reference key="1">
    <citation type="journal article" date="2007" name="PLoS Genet.">
        <title>The complete genome sequence of Yersinia pseudotuberculosis IP31758, the causative agent of Far East scarlet-like fever.</title>
        <authorList>
            <person name="Eppinger M."/>
            <person name="Rosovitz M.J."/>
            <person name="Fricke W.F."/>
            <person name="Rasko D.A."/>
            <person name="Kokorina G."/>
            <person name="Fayolle C."/>
            <person name="Lindler L.E."/>
            <person name="Carniel E."/>
            <person name="Ravel J."/>
        </authorList>
    </citation>
    <scope>NUCLEOTIDE SEQUENCE [LARGE SCALE GENOMIC DNA]</scope>
    <source>
        <strain>IP 31758</strain>
    </source>
</reference>
<feature type="chain" id="PRO_1000060071" description="Probable protein kinase UbiB">
    <location>
        <begin position="1"/>
        <end position="543"/>
    </location>
</feature>
<feature type="transmembrane region" description="Helical" evidence="1">
    <location>
        <begin position="517"/>
        <end position="539"/>
    </location>
</feature>
<feature type="domain" description="Protein kinase" evidence="1">
    <location>
        <begin position="123"/>
        <end position="501"/>
    </location>
</feature>
<feature type="active site" description="Proton acceptor" evidence="1">
    <location>
        <position position="287"/>
    </location>
</feature>
<feature type="binding site" evidence="1">
    <location>
        <begin position="129"/>
        <end position="137"/>
    </location>
    <ligand>
        <name>ATP</name>
        <dbReference type="ChEBI" id="CHEBI:30616"/>
    </ligand>
</feature>
<feature type="binding site" evidence="1">
    <location>
        <position position="152"/>
    </location>
    <ligand>
        <name>ATP</name>
        <dbReference type="ChEBI" id="CHEBI:30616"/>
    </ligand>
</feature>
<protein>
    <recommendedName>
        <fullName evidence="1">Probable protein kinase UbiB</fullName>
        <ecNumber evidence="1">2.7.-.-</ecNumber>
    </recommendedName>
    <alternativeName>
        <fullName evidence="1">Ubiquinone biosynthesis protein UbiB</fullName>
    </alternativeName>
</protein>
<evidence type="ECO:0000255" key="1">
    <source>
        <dbReference type="HAMAP-Rule" id="MF_00414"/>
    </source>
</evidence>
<comment type="function">
    <text evidence="1">Is probably a protein kinase regulator of UbiI activity which is involved in aerobic coenzyme Q (ubiquinone) biosynthesis.</text>
</comment>
<comment type="pathway">
    <text>Cofactor biosynthesis; ubiquinone biosynthesis [regulation].</text>
</comment>
<comment type="subcellular location">
    <subcellularLocation>
        <location evidence="1">Cell inner membrane</location>
        <topology evidence="1">Single-pass membrane protein</topology>
    </subcellularLocation>
</comment>
<comment type="similarity">
    <text evidence="1">Belongs to the ABC1 family. UbiB subfamily.</text>
</comment>
<gene>
    <name evidence="1" type="primary">ubiB</name>
    <name type="ordered locus">YpsIP31758_0273</name>
</gene>